<accession>A8L548</accession>
<evidence type="ECO:0000255" key="1">
    <source>
        <dbReference type="HAMAP-Rule" id="MF_00435"/>
    </source>
</evidence>
<evidence type="ECO:0000255" key="2">
    <source>
        <dbReference type="PROSITE-ProRule" id="PRU01197"/>
    </source>
</evidence>
<evidence type="ECO:0000255" key="3">
    <source>
        <dbReference type="PROSITE-ProRule" id="PRU01198"/>
    </source>
</evidence>
<sequence length="331" mass="35630">MVEIYYDDDANLDNLADRKVAVIGFGSQGHAHALNLRDSGVDVRVGLPETSTSRAKAEEQGLRVVTPAEASAEADIIMILTPDTTHRKIYAESIAPHLTPGKALAFGHGFNIRYGLIEPPAGVDVFMVAPKGPGHLVRRVFVEGKGVPVLVAVEADATGKALDIALAYAKGIGGTRAGALRTTFTEETETDLFGEQAVLCGGASALVQAGFETLVEAGYTPEVAYFECLHELKLIVDLMYEGGISQMRYSISDTAEYGDVTRGPRVITPAVKAEMRKILDEIQDGTFAREWVAEDDAGRATFTKLVEEGKQHPIEQVGGKLRPMMSWIAKD</sequence>
<dbReference type="EC" id="1.1.1.86" evidence="1"/>
<dbReference type="EMBL" id="CP000820">
    <property type="protein sequence ID" value="ABW10548.1"/>
    <property type="molecule type" value="Genomic_DNA"/>
</dbReference>
<dbReference type="RefSeq" id="WP_020458729.1">
    <property type="nucleotide sequence ID" value="NC_009921.1"/>
</dbReference>
<dbReference type="SMR" id="A8L548"/>
<dbReference type="STRING" id="298653.Franean1_1092"/>
<dbReference type="KEGG" id="fre:Franean1_1092"/>
<dbReference type="eggNOG" id="COG0059">
    <property type="taxonomic scope" value="Bacteria"/>
</dbReference>
<dbReference type="HOGENOM" id="CLU_033821_0_1_11"/>
<dbReference type="UniPathway" id="UPA00047">
    <property type="reaction ID" value="UER00056"/>
</dbReference>
<dbReference type="UniPathway" id="UPA00049">
    <property type="reaction ID" value="UER00060"/>
</dbReference>
<dbReference type="GO" id="GO:0005829">
    <property type="term" value="C:cytosol"/>
    <property type="evidence" value="ECO:0007669"/>
    <property type="project" value="TreeGrafter"/>
</dbReference>
<dbReference type="GO" id="GO:0004455">
    <property type="term" value="F:ketol-acid reductoisomerase activity"/>
    <property type="evidence" value="ECO:0007669"/>
    <property type="project" value="UniProtKB-UniRule"/>
</dbReference>
<dbReference type="GO" id="GO:0000287">
    <property type="term" value="F:magnesium ion binding"/>
    <property type="evidence" value="ECO:0007669"/>
    <property type="project" value="UniProtKB-UniRule"/>
</dbReference>
<dbReference type="GO" id="GO:0050661">
    <property type="term" value="F:NADP binding"/>
    <property type="evidence" value="ECO:0007669"/>
    <property type="project" value="InterPro"/>
</dbReference>
<dbReference type="GO" id="GO:0009097">
    <property type="term" value="P:isoleucine biosynthetic process"/>
    <property type="evidence" value="ECO:0007669"/>
    <property type="project" value="UniProtKB-UniRule"/>
</dbReference>
<dbReference type="GO" id="GO:0009099">
    <property type="term" value="P:L-valine biosynthetic process"/>
    <property type="evidence" value="ECO:0007669"/>
    <property type="project" value="UniProtKB-UniRule"/>
</dbReference>
<dbReference type="FunFam" id="3.40.50.720:FF:000023">
    <property type="entry name" value="Ketol-acid reductoisomerase (NADP(+))"/>
    <property type="match status" value="1"/>
</dbReference>
<dbReference type="Gene3D" id="6.10.240.10">
    <property type="match status" value="1"/>
</dbReference>
<dbReference type="Gene3D" id="3.40.50.720">
    <property type="entry name" value="NAD(P)-binding Rossmann-like Domain"/>
    <property type="match status" value="1"/>
</dbReference>
<dbReference type="HAMAP" id="MF_00435">
    <property type="entry name" value="IlvC"/>
    <property type="match status" value="1"/>
</dbReference>
<dbReference type="InterPro" id="IPR008927">
    <property type="entry name" value="6-PGluconate_DH-like_C_sf"/>
</dbReference>
<dbReference type="InterPro" id="IPR013023">
    <property type="entry name" value="KARI"/>
</dbReference>
<dbReference type="InterPro" id="IPR000506">
    <property type="entry name" value="KARI_C"/>
</dbReference>
<dbReference type="InterPro" id="IPR013116">
    <property type="entry name" value="KARI_N"/>
</dbReference>
<dbReference type="InterPro" id="IPR014359">
    <property type="entry name" value="KARI_prok"/>
</dbReference>
<dbReference type="InterPro" id="IPR036291">
    <property type="entry name" value="NAD(P)-bd_dom_sf"/>
</dbReference>
<dbReference type="NCBIfam" id="TIGR00465">
    <property type="entry name" value="ilvC"/>
    <property type="match status" value="1"/>
</dbReference>
<dbReference type="NCBIfam" id="NF004017">
    <property type="entry name" value="PRK05479.1"/>
    <property type="match status" value="1"/>
</dbReference>
<dbReference type="NCBIfam" id="NF009940">
    <property type="entry name" value="PRK13403.1"/>
    <property type="match status" value="1"/>
</dbReference>
<dbReference type="PANTHER" id="PTHR21371">
    <property type="entry name" value="KETOL-ACID REDUCTOISOMERASE, MITOCHONDRIAL"/>
    <property type="match status" value="1"/>
</dbReference>
<dbReference type="PANTHER" id="PTHR21371:SF1">
    <property type="entry name" value="KETOL-ACID REDUCTOISOMERASE, MITOCHONDRIAL"/>
    <property type="match status" value="1"/>
</dbReference>
<dbReference type="Pfam" id="PF01450">
    <property type="entry name" value="KARI_C"/>
    <property type="match status" value="1"/>
</dbReference>
<dbReference type="Pfam" id="PF07991">
    <property type="entry name" value="KARI_N"/>
    <property type="match status" value="1"/>
</dbReference>
<dbReference type="PIRSF" id="PIRSF000116">
    <property type="entry name" value="IlvC_gammaproteo"/>
    <property type="match status" value="1"/>
</dbReference>
<dbReference type="SUPFAM" id="SSF48179">
    <property type="entry name" value="6-phosphogluconate dehydrogenase C-terminal domain-like"/>
    <property type="match status" value="1"/>
</dbReference>
<dbReference type="SUPFAM" id="SSF51735">
    <property type="entry name" value="NAD(P)-binding Rossmann-fold domains"/>
    <property type="match status" value="1"/>
</dbReference>
<dbReference type="PROSITE" id="PS51851">
    <property type="entry name" value="KARI_C"/>
    <property type="match status" value="1"/>
</dbReference>
<dbReference type="PROSITE" id="PS51850">
    <property type="entry name" value="KARI_N"/>
    <property type="match status" value="1"/>
</dbReference>
<organism>
    <name type="scientific">Parafrankia sp. (strain EAN1pec)</name>
    <dbReference type="NCBI Taxonomy" id="298653"/>
    <lineage>
        <taxon>Bacteria</taxon>
        <taxon>Bacillati</taxon>
        <taxon>Actinomycetota</taxon>
        <taxon>Actinomycetes</taxon>
        <taxon>Frankiales</taxon>
        <taxon>Frankiaceae</taxon>
        <taxon>Parafrankia</taxon>
    </lineage>
</organism>
<protein>
    <recommendedName>
        <fullName evidence="1">Ketol-acid reductoisomerase (NADP(+))</fullName>
        <shortName evidence="1">KARI</shortName>
        <ecNumber evidence="1">1.1.1.86</ecNumber>
    </recommendedName>
    <alternativeName>
        <fullName evidence="1">Acetohydroxy-acid isomeroreductase</fullName>
        <shortName evidence="1">AHIR</shortName>
    </alternativeName>
    <alternativeName>
        <fullName evidence="1">Alpha-keto-beta-hydroxylacyl reductoisomerase</fullName>
    </alternativeName>
    <alternativeName>
        <fullName evidence="1">Ketol-acid reductoisomerase type 1</fullName>
    </alternativeName>
    <alternativeName>
        <fullName evidence="1">Ketol-acid reductoisomerase type I</fullName>
    </alternativeName>
</protein>
<name>ILVC_PARS2</name>
<feature type="chain" id="PRO_1000190966" description="Ketol-acid reductoisomerase (NADP(+))">
    <location>
        <begin position="1"/>
        <end position="331"/>
    </location>
</feature>
<feature type="domain" description="KARI N-terminal Rossmann" evidence="2">
    <location>
        <begin position="2"/>
        <end position="182"/>
    </location>
</feature>
<feature type="domain" description="KARI C-terminal knotted" evidence="3">
    <location>
        <begin position="183"/>
        <end position="328"/>
    </location>
</feature>
<feature type="active site" evidence="1">
    <location>
        <position position="108"/>
    </location>
</feature>
<feature type="binding site" evidence="1">
    <location>
        <begin position="25"/>
        <end position="28"/>
    </location>
    <ligand>
        <name>NADP(+)</name>
        <dbReference type="ChEBI" id="CHEBI:58349"/>
    </ligand>
</feature>
<feature type="binding site" evidence="1">
    <location>
        <position position="51"/>
    </location>
    <ligand>
        <name>NADP(+)</name>
        <dbReference type="ChEBI" id="CHEBI:58349"/>
    </ligand>
</feature>
<feature type="binding site" evidence="1">
    <location>
        <position position="53"/>
    </location>
    <ligand>
        <name>NADP(+)</name>
        <dbReference type="ChEBI" id="CHEBI:58349"/>
    </ligand>
</feature>
<feature type="binding site" evidence="1">
    <location>
        <position position="134"/>
    </location>
    <ligand>
        <name>NADP(+)</name>
        <dbReference type="ChEBI" id="CHEBI:58349"/>
    </ligand>
</feature>
<feature type="binding site" evidence="1">
    <location>
        <position position="191"/>
    </location>
    <ligand>
        <name>Mg(2+)</name>
        <dbReference type="ChEBI" id="CHEBI:18420"/>
        <label>1</label>
    </ligand>
</feature>
<feature type="binding site" evidence="1">
    <location>
        <position position="191"/>
    </location>
    <ligand>
        <name>Mg(2+)</name>
        <dbReference type="ChEBI" id="CHEBI:18420"/>
        <label>2</label>
    </ligand>
</feature>
<feature type="binding site" evidence="1">
    <location>
        <position position="195"/>
    </location>
    <ligand>
        <name>Mg(2+)</name>
        <dbReference type="ChEBI" id="CHEBI:18420"/>
        <label>1</label>
    </ligand>
</feature>
<feature type="binding site" evidence="1">
    <location>
        <position position="227"/>
    </location>
    <ligand>
        <name>Mg(2+)</name>
        <dbReference type="ChEBI" id="CHEBI:18420"/>
        <label>2</label>
    </ligand>
</feature>
<feature type="binding site" evidence="1">
    <location>
        <position position="231"/>
    </location>
    <ligand>
        <name>Mg(2+)</name>
        <dbReference type="ChEBI" id="CHEBI:18420"/>
        <label>2</label>
    </ligand>
</feature>
<feature type="binding site" evidence="1">
    <location>
        <position position="252"/>
    </location>
    <ligand>
        <name>substrate</name>
    </ligand>
</feature>
<keyword id="KW-0028">Amino-acid biosynthesis</keyword>
<keyword id="KW-0100">Branched-chain amino acid biosynthesis</keyword>
<keyword id="KW-0460">Magnesium</keyword>
<keyword id="KW-0479">Metal-binding</keyword>
<keyword id="KW-0521">NADP</keyword>
<keyword id="KW-0560">Oxidoreductase</keyword>
<comment type="function">
    <text evidence="1">Involved in the biosynthesis of branched-chain amino acids (BCAA). Catalyzes an alkyl-migration followed by a ketol-acid reduction of (S)-2-acetolactate (S2AL) to yield (R)-2,3-dihydroxy-isovalerate. In the isomerase reaction, S2AL is rearranged via a Mg-dependent methyl migration to produce 3-hydroxy-3-methyl-2-ketobutyrate (HMKB). In the reductase reaction, this 2-ketoacid undergoes a metal-dependent reduction by NADPH to yield (R)-2,3-dihydroxy-isovalerate.</text>
</comment>
<comment type="catalytic activity">
    <reaction evidence="1">
        <text>(2R)-2,3-dihydroxy-3-methylbutanoate + NADP(+) = (2S)-2-acetolactate + NADPH + H(+)</text>
        <dbReference type="Rhea" id="RHEA:22068"/>
        <dbReference type="ChEBI" id="CHEBI:15378"/>
        <dbReference type="ChEBI" id="CHEBI:49072"/>
        <dbReference type="ChEBI" id="CHEBI:57783"/>
        <dbReference type="ChEBI" id="CHEBI:58349"/>
        <dbReference type="ChEBI" id="CHEBI:58476"/>
        <dbReference type="EC" id="1.1.1.86"/>
    </reaction>
</comment>
<comment type="catalytic activity">
    <reaction evidence="1">
        <text>(2R,3R)-2,3-dihydroxy-3-methylpentanoate + NADP(+) = (S)-2-ethyl-2-hydroxy-3-oxobutanoate + NADPH + H(+)</text>
        <dbReference type="Rhea" id="RHEA:13493"/>
        <dbReference type="ChEBI" id="CHEBI:15378"/>
        <dbReference type="ChEBI" id="CHEBI:49256"/>
        <dbReference type="ChEBI" id="CHEBI:49258"/>
        <dbReference type="ChEBI" id="CHEBI:57783"/>
        <dbReference type="ChEBI" id="CHEBI:58349"/>
        <dbReference type="EC" id="1.1.1.86"/>
    </reaction>
</comment>
<comment type="cofactor">
    <cofactor evidence="1">
        <name>Mg(2+)</name>
        <dbReference type="ChEBI" id="CHEBI:18420"/>
    </cofactor>
    <text evidence="1">Binds 2 magnesium ions per subunit.</text>
</comment>
<comment type="pathway">
    <text evidence="1">Amino-acid biosynthesis; L-isoleucine biosynthesis; L-isoleucine from 2-oxobutanoate: step 2/4.</text>
</comment>
<comment type="pathway">
    <text evidence="1">Amino-acid biosynthesis; L-valine biosynthesis; L-valine from pyruvate: step 2/4.</text>
</comment>
<comment type="similarity">
    <text evidence="1">Belongs to the ketol-acid reductoisomerase family.</text>
</comment>
<proteinExistence type="inferred from homology"/>
<gene>
    <name evidence="1" type="primary">ilvC</name>
    <name type="ordered locus">Franean1_1092</name>
</gene>
<reference key="1">
    <citation type="journal article" date="2007" name="Genome Res.">
        <title>Genome characteristics of facultatively symbiotic Frankia sp. strains reflect host range and host plant biogeography.</title>
        <authorList>
            <person name="Normand P."/>
            <person name="Lapierre P."/>
            <person name="Tisa L.S."/>
            <person name="Gogarten J.P."/>
            <person name="Alloisio N."/>
            <person name="Bagnarol E."/>
            <person name="Bassi C.A."/>
            <person name="Berry A.M."/>
            <person name="Bickhart D.M."/>
            <person name="Choisne N."/>
            <person name="Couloux A."/>
            <person name="Cournoyer B."/>
            <person name="Cruveiller S."/>
            <person name="Daubin V."/>
            <person name="Demange N."/>
            <person name="Francino M.P."/>
            <person name="Goltsman E."/>
            <person name="Huang Y."/>
            <person name="Kopp O.R."/>
            <person name="Labarre L."/>
            <person name="Lapidus A."/>
            <person name="Lavire C."/>
            <person name="Marechal J."/>
            <person name="Martinez M."/>
            <person name="Mastronunzio J.E."/>
            <person name="Mullin B.C."/>
            <person name="Niemann J."/>
            <person name="Pujic P."/>
            <person name="Rawnsley T."/>
            <person name="Rouy Z."/>
            <person name="Schenowitz C."/>
            <person name="Sellstedt A."/>
            <person name="Tavares F."/>
            <person name="Tomkins J.P."/>
            <person name="Vallenet D."/>
            <person name="Valverde C."/>
            <person name="Wall L.G."/>
            <person name="Wang Y."/>
            <person name="Medigue C."/>
            <person name="Benson D.R."/>
        </authorList>
    </citation>
    <scope>NUCLEOTIDE SEQUENCE [LARGE SCALE GENOMIC DNA]</scope>
    <source>
        <strain>EAN1pec</strain>
    </source>
</reference>